<feature type="chain" id="PRO_1000193295" description="Protein RecA">
    <location>
        <begin position="1"/>
        <end position="361"/>
    </location>
</feature>
<feature type="binding site" evidence="1">
    <location>
        <begin position="77"/>
        <end position="84"/>
    </location>
    <ligand>
        <name>ATP</name>
        <dbReference type="ChEBI" id="CHEBI:30616"/>
    </ligand>
</feature>
<evidence type="ECO:0000255" key="1">
    <source>
        <dbReference type="HAMAP-Rule" id="MF_00268"/>
    </source>
</evidence>
<reference key="1">
    <citation type="submission" date="2009-03" db="EMBL/GenBank/DDBJ databases">
        <title>Brucella melitensis ATCC 23457 whole genome shotgun sequencing project.</title>
        <authorList>
            <person name="Setubal J.C."/>
            <person name="Boyle S."/>
            <person name="Crasta O.R."/>
            <person name="Gillespie J.J."/>
            <person name="Kenyon R.W."/>
            <person name="Lu J."/>
            <person name="Mane S."/>
            <person name="Nagrani S."/>
            <person name="Shallom J.M."/>
            <person name="Shallom S."/>
            <person name="Shukla M."/>
            <person name="Snyder E.E."/>
            <person name="Sobral B.W."/>
            <person name="Wattam A.R."/>
            <person name="Will R."/>
            <person name="Williams K."/>
            <person name="Yoo H."/>
            <person name="Munk C."/>
            <person name="Tapia R."/>
            <person name="Han C."/>
            <person name="Detter J.C."/>
            <person name="Bruce D."/>
            <person name="Brettin T.S."/>
        </authorList>
    </citation>
    <scope>NUCLEOTIDE SEQUENCE [LARGE SCALE GENOMIC DNA]</scope>
    <source>
        <strain>ATCC 23457</strain>
    </source>
</reference>
<protein>
    <recommendedName>
        <fullName evidence="1">Protein RecA</fullName>
    </recommendedName>
    <alternativeName>
        <fullName evidence="1">Recombinase A</fullName>
    </alternativeName>
</protein>
<gene>
    <name evidence="1" type="primary">recA</name>
    <name type="ordered locus">BMEA_A1246</name>
</gene>
<proteinExistence type="inferred from homology"/>
<keyword id="KW-0067">ATP-binding</keyword>
<keyword id="KW-0963">Cytoplasm</keyword>
<keyword id="KW-0227">DNA damage</keyword>
<keyword id="KW-0233">DNA recombination</keyword>
<keyword id="KW-0234">DNA repair</keyword>
<keyword id="KW-0238">DNA-binding</keyword>
<keyword id="KW-0547">Nucleotide-binding</keyword>
<keyword id="KW-0742">SOS response</keyword>
<organism>
    <name type="scientific">Brucella melitensis biotype 2 (strain ATCC 23457)</name>
    <dbReference type="NCBI Taxonomy" id="546272"/>
    <lineage>
        <taxon>Bacteria</taxon>
        <taxon>Pseudomonadati</taxon>
        <taxon>Pseudomonadota</taxon>
        <taxon>Alphaproteobacteria</taxon>
        <taxon>Hyphomicrobiales</taxon>
        <taxon>Brucellaceae</taxon>
        <taxon>Brucella/Ochrobactrum group</taxon>
        <taxon>Brucella</taxon>
    </lineage>
</organism>
<dbReference type="EMBL" id="CP001488">
    <property type="protein sequence ID" value="ACO00977.1"/>
    <property type="molecule type" value="Genomic_DNA"/>
</dbReference>
<dbReference type="RefSeq" id="WP_002964332.1">
    <property type="nucleotide sequence ID" value="NC_012441.1"/>
</dbReference>
<dbReference type="SMR" id="C0RJG9"/>
<dbReference type="GeneID" id="97533554"/>
<dbReference type="KEGG" id="bmi:BMEA_A1246"/>
<dbReference type="HOGENOM" id="CLU_040469_3_2_5"/>
<dbReference type="PRO" id="PR:C0RJG9"/>
<dbReference type="Proteomes" id="UP000001748">
    <property type="component" value="Chromosome I"/>
</dbReference>
<dbReference type="GO" id="GO:0005829">
    <property type="term" value="C:cytosol"/>
    <property type="evidence" value="ECO:0007669"/>
    <property type="project" value="TreeGrafter"/>
</dbReference>
<dbReference type="GO" id="GO:0005524">
    <property type="term" value="F:ATP binding"/>
    <property type="evidence" value="ECO:0007669"/>
    <property type="project" value="UniProtKB-UniRule"/>
</dbReference>
<dbReference type="GO" id="GO:0016887">
    <property type="term" value="F:ATP hydrolysis activity"/>
    <property type="evidence" value="ECO:0007669"/>
    <property type="project" value="InterPro"/>
</dbReference>
<dbReference type="GO" id="GO:0140664">
    <property type="term" value="F:ATP-dependent DNA damage sensor activity"/>
    <property type="evidence" value="ECO:0007669"/>
    <property type="project" value="InterPro"/>
</dbReference>
<dbReference type="GO" id="GO:0003684">
    <property type="term" value="F:damaged DNA binding"/>
    <property type="evidence" value="ECO:0007669"/>
    <property type="project" value="UniProtKB-UniRule"/>
</dbReference>
<dbReference type="GO" id="GO:0003697">
    <property type="term" value="F:single-stranded DNA binding"/>
    <property type="evidence" value="ECO:0007669"/>
    <property type="project" value="UniProtKB-UniRule"/>
</dbReference>
<dbReference type="GO" id="GO:0006310">
    <property type="term" value="P:DNA recombination"/>
    <property type="evidence" value="ECO:0007669"/>
    <property type="project" value="UniProtKB-UniRule"/>
</dbReference>
<dbReference type="GO" id="GO:0006281">
    <property type="term" value="P:DNA repair"/>
    <property type="evidence" value="ECO:0007669"/>
    <property type="project" value="UniProtKB-UniRule"/>
</dbReference>
<dbReference type="GO" id="GO:0009432">
    <property type="term" value="P:SOS response"/>
    <property type="evidence" value="ECO:0007669"/>
    <property type="project" value="UniProtKB-UniRule"/>
</dbReference>
<dbReference type="CDD" id="cd00983">
    <property type="entry name" value="RecA"/>
    <property type="match status" value="1"/>
</dbReference>
<dbReference type="FunFam" id="3.40.50.300:FF:000087">
    <property type="entry name" value="Recombinase RecA"/>
    <property type="match status" value="1"/>
</dbReference>
<dbReference type="Gene3D" id="3.40.50.300">
    <property type="entry name" value="P-loop containing nucleotide triphosphate hydrolases"/>
    <property type="match status" value="1"/>
</dbReference>
<dbReference type="HAMAP" id="MF_00268">
    <property type="entry name" value="RecA"/>
    <property type="match status" value="1"/>
</dbReference>
<dbReference type="InterPro" id="IPR003593">
    <property type="entry name" value="AAA+_ATPase"/>
</dbReference>
<dbReference type="InterPro" id="IPR013765">
    <property type="entry name" value="DNA_recomb/repair_RecA"/>
</dbReference>
<dbReference type="InterPro" id="IPR020584">
    <property type="entry name" value="DNA_recomb/repair_RecA_CS"/>
</dbReference>
<dbReference type="InterPro" id="IPR027417">
    <property type="entry name" value="P-loop_NTPase"/>
</dbReference>
<dbReference type="InterPro" id="IPR049261">
    <property type="entry name" value="RecA-like_C"/>
</dbReference>
<dbReference type="InterPro" id="IPR049428">
    <property type="entry name" value="RecA-like_N"/>
</dbReference>
<dbReference type="InterPro" id="IPR020588">
    <property type="entry name" value="RecA_ATP-bd"/>
</dbReference>
<dbReference type="InterPro" id="IPR023400">
    <property type="entry name" value="RecA_C_sf"/>
</dbReference>
<dbReference type="InterPro" id="IPR020587">
    <property type="entry name" value="RecA_monomer-monomer_interface"/>
</dbReference>
<dbReference type="NCBIfam" id="TIGR02012">
    <property type="entry name" value="tigrfam_recA"/>
    <property type="match status" value="1"/>
</dbReference>
<dbReference type="PANTHER" id="PTHR45900:SF1">
    <property type="entry name" value="MITOCHONDRIAL DNA REPAIR PROTEIN RECA HOMOLOG-RELATED"/>
    <property type="match status" value="1"/>
</dbReference>
<dbReference type="PANTHER" id="PTHR45900">
    <property type="entry name" value="RECA"/>
    <property type="match status" value="1"/>
</dbReference>
<dbReference type="Pfam" id="PF00154">
    <property type="entry name" value="RecA"/>
    <property type="match status" value="1"/>
</dbReference>
<dbReference type="Pfam" id="PF21096">
    <property type="entry name" value="RecA_C"/>
    <property type="match status" value="1"/>
</dbReference>
<dbReference type="PRINTS" id="PR00142">
    <property type="entry name" value="RECA"/>
</dbReference>
<dbReference type="SMART" id="SM00382">
    <property type="entry name" value="AAA"/>
    <property type="match status" value="1"/>
</dbReference>
<dbReference type="SUPFAM" id="SSF52540">
    <property type="entry name" value="P-loop containing nucleoside triphosphate hydrolases"/>
    <property type="match status" value="1"/>
</dbReference>
<dbReference type="SUPFAM" id="SSF54752">
    <property type="entry name" value="RecA protein, C-terminal domain"/>
    <property type="match status" value="1"/>
</dbReference>
<dbReference type="PROSITE" id="PS00321">
    <property type="entry name" value="RECA_1"/>
    <property type="match status" value="1"/>
</dbReference>
<dbReference type="PROSITE" id="PS50162">
    <property type="entry name" value="RECA_2"/>
    <property type="match status" value="1"/>
</dbReference>
<dbReference type="PROSITE" id="PS50163">
    <property type="entry name" value="RECA_3"/>
    <property type="match status" value="1"/>
</dbReference>
<sequence>MSQNSLRLVEDNSVDKTKALDAALSQIERAFGKGSIMRLGQNDQVVEIETVSTGSLSLDIALGVGGLPKGRIVEIYGPESSGKTTLALHTIAEAQKKGGICAFVDAEHALDPVYARKLGVDLENLLISQPDTGEQALEITDTLVRSGAIDVLVVDSVAALTPRAEIEGEMGDSLPGLQARLMSQALRKLTGSISRSNCMVIFINQIRMKIGVMFGSPETTTGGNALKFYASVRLDIRRIGSIKERDEVVGNQTRVKVVKNKLAPPFKQVEFDIMYGAGVSKVGELVDLGVKAGVVEKSGAWFSYNSQRLGQGRENAKQYLKDNPEVAREIETTLRQNAGLIAEQFLDDGGPEEDAAGAAEM</sequence>
<comment type="function">
    <text evidence="1">Can catalyze the hydrolysis of ATP in the presence of single-stranded DNA, the ATP-dependent uptake of single-stranded DNA by duplex DNA, and the ATP-dependent hybridization of homologous single-stranded DNAs. It interacts with LexA causing its activation and leading to its autocatalytic cleavage.</text>
</comment>
<comment type="subcellular location">
    <subcellularLocation>
        <location evidence="1">Cytoplasm</location>
    </subcellularLocation>
</comment>
<comment type="similarity">
    <text evidence="1">Belongs to the RecA family.</text>
</comment>
<name>RECA_BRUMB</name>
<accession>C0RJG9</accession>